<gene>
    <name evidence="1" type="primary">clpP</name>
    <name type="ordered locus">Dvul_1734</name>
</gene>
<proteinExistence type="inferred from homology"/>
<accession>A1VE85</accession>
<protein>
    <recommendedName>
        <fullName evidence="1">ATP-dependent Clp protease proteolytic subunit</fullName>
        <ecNumber evidence="1">3.4.21.92</ecNumber>
    </recommendedName>
    <alternativeName>
        <fullName evidence="1">Endopeptidase Clp</fullName>
    </alternativeName>
</protein>
<feature type="chain" id="PRO_1000026088" description="ATP-dependent Clp protease proteolytic subunit">
    <location>
        <begin position="1"/>
        <end position="201"/>
    </location>
</feature>
<feature type="active site" description="Nucleophile" evidence="1">
    <location>
        <position position="97"/>
    </location>
</feature>
<feature type="active site" evidence="1">
    <location>
        <position position="122"/>
    </location>
</feature>
<keyword id="KW-0963">Cytoplasm</keyword>
<keyword id="KW-0378">Hydrolase</keyword>
<keyword id="KW-0645">Protease</keyword>
<keyword id="KW-0720">Serine protease</keyword>
<organism>
    <name type="scientific">Nitratidesulfovibrio vulgaris (strain DP4)</name>
    <name type="common">Desulfovibrio vulgaris</name>
    <dbReference type="NCBI Taxonomy" id="391774"/>
    <lineage>
        <taxon>Bacteria</taxon>
        <taxon>Pseudomonadati</taxon>
        <taxon>Thermodesulfobacteriota</taxon>
        <taxon>Desulfovibrionia</taxon>
        <taxon>Desulfovibrionales</taxon>
        <taxon>Desulfovibrionaceae</taxon>
        <taxon>Nitratidesulfovibrio</taxon>
    </lineage>
</organism>
<sequence>MPVPIVIESTGRAERAYDIYSRLLKDRIVLLGTPIDDQVASLICAQLLFLESENPEKEIHMYINSPGGSVTAGMAIYDTMQYINSPVSTLCMGQAASMGALLLAAGAPGLRFSLPHSRIMIHQPSGGFQGQATDIDIQAREVLRLKQSLNAIMSQHTGKPLEQVALDTERDYFMGPEEAQAYGLIDRVLTSRSEATDTISK</sequence>
<dbReference type="EC" id="3.4.21.92" evidence="1"/>
<dbReference type="EMBL" id="CP000527">
    <property type="protein sequence ID" value="ABM28751.1"/>
    <property type="molecule type" value="Genomic_DNA"/>
</dbReference>
<dbReference type="RefSeq" id="WP_010938630.1">
    <property type="nucleotide sequence ID" value="NC_008751.1"/>
</dbReference>
<dbReference type="SMR" id="A1VE85"/>
<dbReference type="MEROPS" id="S14.001"/>
<dbReference type="KEGG" id="dvl:Dvul_1734"/>
<dbReference type="HOGENOM" id="CLU_058707_3_2_7"/>
<dbReference type="Proteomes" id="UP000009173">
    <property type="component" value="Chromosome"/>
</dbReference>
<dbReference type="GO" id="GO:0005737">
    <property type="term" value="C:cytoplasm"/>
    <property type="evidence" value="ECO:0007669"/>
    <property type="project" value="UniProtKB-SubCell"/>
</dbReference>
<dbReference type="GO" id="GO:0009368">
    <property type="term" value="C:endopeptidase Clp complex"/>
    <property type="evidence" value="ECO:0007669"/>
    <property type="project" value="TreeGrafter"/>
</dbReference>
<dbReference type="GO" id="GO:0004176">
    <property type="term" value="F:ATP-dependent peptidase activity"/>
    <property type="evidence" value="ECO:0007669"/>
    <property type="project" value="InterPro"/>
</dbReference>
<dbReference type="GO" id="GO:0051117">
    <property type="term" value="F:ATPase binding"/>
    <property type="evidence" value="ECO:0007669"/>
    <property type="project" value="TreeGrafter"/>
</dbReference>
<dbReference type="GO" id="GO:0004252">
    <property type="term" value="F:serine-type endopeptidase activity"/>
    <property type="evidence" value="ECO:0007669"/>
    <property type="project" value="UniProtKB-UniRule"/>
</dbReference>
<dbReference type="GO" id="GO:0006515">
    <property type="term" value="P:protein quality control for misfolded or incompletely synthesized proteins"/>
    <property type="evidence" value="ECO:0007669"/>
    <property type="project" value="TreeGrafter"/>
</dbReference>
<dbReference type="CDD" id="cd07017">
    <property type="entry name" value="S14_ClpP_2"/>
    <property type="match status" value="1"/>
</dbReference>
<dbReference type="FunFam" id="3.90.226.10:FF:000001">
    <property type="entry name" value="ATP-dependent Clp protease proteolytic subunit"/>
    <property type="match status" value="1"/>
</dbReference>
<dbReference type="Gene3D" id="3.90.226.10">
    <property type="entry name" value="2-enoyl-CoA Hydratase, Chain A, domain 1"/>
    <property type="match status" value="1"/>
</dbReference>
<dbReference type="HAMAP" id="MF_00444">
    <property type="entry name" value="ClpP"/>
    <property type="match status" value="1"/>
</dbReference>
<dbReference type="InterPro" id="IPR001907">
    <property type="entry name" value="ClpP"/>
</dbReference>
<dbReference type="InterPro" id="IPR029045">
    <property type="entry name" value="ClpP/crotonase-like_dom_sf"/>
</dbReference>
<dbReference type="InterPro" id="IPR023562">
    <property type="entry name" value="ClpP/TepA"/>
</dbReference>
<dbReference type="InterPro" id="IPR033135">
    <property type="entry name" value="ClpP_His_AS"/>
</dbReference>
<dbReference type="InterPro" id="IPR018215">
    <property type="entry name" value="ClpP_Ser_AS"/>
</dbReference>
<dbReference type="NCBIfam" id="TIGR00493">
    <property type="entry name" value="clpP"/>
    <property type="match status" value="1"/>
</dbReference>
<dbReference type="NCBIfam" id="NF001368">
    <property type="entry name" value="PRK00277.1"/>
    <property type="match status" value="1"/>
</dbReference>
<dbReference type="NCBIfam" id="NF009205">
    <property type="entry name" value="PRK12553.1"/>
    <property type="match status" value="1"/>
</dbReference>
<dbReference type="PANTHER" id="PTHR10381">
    <property type="entry name" value="ATP-DEPENDENT CLP PROTEASE PROTEOLYTIC SUBUNIT"/>
    <property type="match status" value="1"/>
</dbReference>
<dbReference type="PANTHER" id="PTHR10381:SF11">
    <property type="entry name" value="ATP-DEPENDENT CLP PROTEASE PROTEOLYTIC SUBUNIT, MITOCHONDRIAL"/>
    <property type="match status" value="1"/>
</dbReference>
<dbReference type="Pfam" id="PF00574">
    <property type="entry name" value="CLP_protease"/>
    <property type="match status" value="1"/>
</dbReference>
<dbReference type="PRINTS" id="PR00127">
    <property type="entry name" value="CLPPROTEASEP"/>
</dbReference>
<dbReference type="SUPFAM" id="SSF52096">
    <property type="entry name" value="ClpP/crotonase"/>
    <property type="match status" value="1"/>
</dbReference>
<dbReference type="PROSITE" id="PS00382">
    <property type="entry name" value="CLP_PROTEASE_HIS"/>
    <property type="match status" value="1"/>
</dbReference>
<dbReference type="PROSITE" id="PS00381">
    <property type="entry name" value="CLP_PROTEASE_SER"/>
    <property type="match status" value="1"/>
</dbReference>
<comment type="function">
    <text evidence="1">Cleaves peptides in various proteins in a process that requires ATP hydrolysis. Has a chymotrypsin-like activity. Plays a major role in the degradation of misfolded proteins.</text>
</comment>
<comment type="catalytic activity">
    <reaction evidence="1">
        <text>Hydrolysis of proteins to small peptides in the presence of ATP and magnesium. alpha-casein is the usual test substrate. In the absence of ATP, only oligopeptides shorter than five residues are hydrolyzed (such as succinyl-Leu-Tyr-|-NHMec, and Leu-Tyr-Leu-|-Tyr-Trp, in which cleavage of the -Tyr-|-Leu- and -Tyr-|-Trp bonds also occurs).</text>
        <dbReference type="EC" id="3.4.21.92"/>
    </reaction>
</comment>
<comment type="subunit">
    <text evidence="1">Fourteen ClpP subunits assemble into 2 heptameric rings which stack back to back to give a disk-like structure with a central cavity, resembling the structure of eukaryotic proteasomes.</text>
</comment>
<comment type="subcellular location">
    <subcellularLocation>
        <location evidence="1">Cytoplasm</location>
    </subcellularLocation>
</comment>
<comment type="similarity">
    <text evidence="1">Belongs to the peptidase S14 family.</text>
</comment>
<name>CLPP_NITV4</name>
<reference key="1">
    <citation type="journal article" date="2009" name="Environ. Microbiol.">
        <title>Contribution of mobile genetic elements to Desulfovibrio vulgaris genome plasticity.</title>
        <authorList>
            <person name="Walker C.B."/>
            <person name="Stolyar S."/>
            <person name="Chivian D."/>
            <person name="Pinel N."/>
            <person name="Gabster J.A."/>
            <person name="Dehal P.S."/>
            <person name="He Z."/>
            <person name="Yang Z.K."/>
            <person name="Yen H.C."/>
            <person name="Zhou J."/>
            <person name="Wall J.D."/>
            <person name="Hazen T.C."/>
            <person name="Arkin A.P."/>
            <person name="Stahl D.A."/>
        </authorList>
    </citation>
    <scope>NUCLEOTIDE SEQUENCE [LARGE SCALE GENOMIC DNA]</scope>
    <source>
        <strain>DP4</strain>
    </source>
</reference>
<evidence type="ECO:0000255" key="1">
    <source>
        <dbReference type="HAMAP-Rule" id="MF_00444"/>
    </source>
</evidence>